<name>RSMA_WOLPM</name>
<evidence type="ECO:0000255" key="1">
    <source>
        <dbReference type="HAMAP-Rule" id="MF_00607"/>
    </source>
</evidence>
<proteinExistence type="inferred from homology"/>
<keyword id="KW-0963">Cytoplasm</keyword>
<keyword id="KW-0489">Methyltransferase</keyword>
<keyword id="KW-0694">RNA-binding</keyword>
<keyword id="KW-0698">rRNA processing</keyword>
<keyword id="KW-0949">S-adenosyl-L-methionine</keyword>
<keyword id="KW-0808">Transferase</keyword>
<gene>
    <name evidence="1" type="primary">rsmA</name>
    <name evidence="1" type="synonym">ksgA</name>
    <name type="ordered locus">WD_0090</name>
</gene>
<sequence length="286" mass="32937">MNFRQLIFKILYNENNMKKFLLKPKKSLGQNFILSSEITKKIVALAGSLENFNVIEIGPGYGALTREILVHNPKSLLSIEKDRDLVKHHDQLLNEHQGKYRIIEADALHIIEEELIERPVKVIANLPYNISVALFLKWLDSIKFFTSLTLMFQKEVADRITARPNSKDYGPLSVLSQLLCDIKKEFDIEPKEFFPRPKIHSSVITVNPLPTPKFVVNLETLIKLIRAVFAQRRKMLRNSLQNITNHAETVLENAKLSGNERPENLTIEQFCLLANNVECLLCNKMY</sequence>
<dbReference type="EC" id="2.1.1.182" evidence="1"/>
<dbReference type="EMBL" id="AE017196">
    <property type="protein sequence ID" value="AAS13848.1"/>
    <property type="molecule type" value="Genomic_DNA"/>
</dbReference>
<dbReference type="SMR" id="Q73IR3"/>
<dbReference type="EnsemblBacteria" id="AAS13848">
    <property type="protein sequence ID" value="AAS13848"/>
    <property type="gene ID" value="WD_0090"/>
</dbReference>
<dbReference type="KEGG" id="wol:WD_0090"/>
<dbReference type="eggNOG" id="COG0030">
    <property type="taxonomic scope" value="Bacteria"/>
</dbReference>
<dbReference type="Proteomes" id="UP000008215">
    <property type="component" value="Chromosome"/>
</dbReference>
<dbReference type="GO" id="GO:0005737">
    <property type="term" value="C:cytoplasm"/>
    <property type="evidence" value="ECO:0007669"/>
    <property type="project" value="UniProtKB-SubCell"/>
</dbReference>
<dbReference type="GO" id="GO:0052908">
    <property type="term" value="F:16S rRNA (adenine(1518)-N(6)/adenine(1519)-N(6))-dimethyltransferase activity"/>
    <property type="evidence" value="ECO:0007669"/>
    <property type="project" value="UniProtKB-EC"/>
</dbReference>
<dbReference type="GO" id="GO:0003723">
    <property type="term" value="F:RNA binding"/>
    <property type="evidence" value="ECO:0007669"/>
    <property type="project" value="UniProtKB-KW"/>
</dbReference>
<dbReference type="CDD" id="cd02440">
    <property type="entry name" value="AdoMet_MTases"/>
    <property type="match status" value="1"/>
</dbReference>
<dbReference type="FunFam" id="1.10.8.100:FF:000001">
    <property type="entry name" value="Ribosomal RNA small subunit methyltransferase A"/>
    <property type="match status" value="1"/>
</dbReference>
<dbReference type="Gene3D" id="1.10.8.100">
    <property type="entry name" value="Ribosomal RNA adenine dimethylase-like, domain 2"/>
    <property type="match status" value="1"/>
</dbReference>
<dbReference type="Gene3D" id="3.40.50.150">
    <property type="entry name" value="Vaccinia Virus protein VP39"/>
    <property type="match status" value="1"/>
</dbReference>
<dbReference type="HAMAP" id="MF_00607">
    <property type="entry name" value="16SrRNA_methyltr_A"/>
    <property type="match status" value="1"/>
</dbReference>
<dbReference type="InterPro" id="IPR001737">
    <property type="entry name" value="KsgA/Erm"/>
</dbReference>
<dbReference type="InterPro" id="IPR023165">
    <property type="entry name" value="rRNA_Ade_diMease-like_C"/>
</dbReference>
<dbReference type="InterPro" id="IPR020596">
    <property type="entry name" value="rRNA_Ade_Mease_Trfase_CS"/>
</dbReference>
<dbReference type="InterPro" id="IPR020598">
    <property type="entry name" value="rRNA_Ade_methylase_Trfase_N"/>
</dbReference>
<dbReference type="InterPro" id="IPR011530">
    <property type="entry name" value="rRNA_adenine_dimethylase"/>
</dbReference>
<dbReference type="InterPro" id="IPR029063">
    <property type="entry name" value="SAM-dependent_MTases_sf"/>
</dbReference>
<dbReference type="NCBIfam" id="TIGR00755">
    <property type="entry name" value="ksgA"/>
    <property type="match status" value="1"/>
</dbReference>
<dbReference type="PANTHER" id="PTHR11727">
    <property type="entry name" value="DIMETHYLADENOSINE TRANSFERASE"/>
    <property type="match status" value="1"/>
</dbReference>
<dbReference type="PANTHER" id="PTHR11727:SF7">
    <property type="entry name" value="DIMETHYLADENOSINE TRANSFERASE-RELATED"/>
    <property type="match status" value="1"/>
</dbReference>
<dbReference type="Pfam" id="PF00398">
    <property type="entry name" value="RrnaAD"/>
    <property type="match status" value="1"/>
</dbReference>
<dbReference type="SMART" id="SM00650">
    <property type="entry name" value="rADc"/>
    <property type="match status" value="1"/>
</dbReference>
<dbReference type="SUPFAM" id="SSF53335">
    <property type="entry name" value="S-adenosyl-L-methionine-dependent methyltransferases"/>
    <property type="match status" value="1"/>
</dbReference>
<dbReference type="PROSITE" id="PS01131">
    <property type="entry name" value="RRNA_A_DIMETH"/>
    <property type="match status" value="1"/>
</dbReference>
<dbReference type="PROSITE" id="PS51689">
    <property type="entry name" value="SAM_RNA_A_N6_MT"/>
    <property type="match status" value="1"/>
</dbReference>
<comment type="function">
    <text evidence="1">Specifically dimethylates two adjacent adenosines (A1518 and A1519) in the loop of a conserved hairpin near the 3'-end of 16S rRNA in the 30S particle. May play a critical role in biogenesis of 30S subunits.</text>
</comment>
<comment type="catalytic activity">
    <reaction evidence="1">
        <text>adenosine(1518)/adenosine(1519) in 16S rRNA + 4 S-adenosyl-L-methionine = N(6)-dimethyladenosine(1518)/N(6)-dimethyladenosine(1519) in 16S rRNA + 4 S-adenosyl-L-homocysteine + 4 H(+)</text>
        <dbReference type="Rhea" id="RHEA:19609"/>
        <dbReference type="Rhea" id="RHEA-COMP:10232"/>
        <dbReference type="Rhea" id="RHEA-COMP:10233"/>
        <dbReference type="ChEBI" id="CHEBI:15378"/>
        <dbReference type="ChEBI" id="CHEBI:57856"/>
        <dbReference type="ChEBI" id="CHEBI:59789"/>
        <dbReference type="ChEBI" id="CHEBI:74411"/>
        <dbReference type="ChEBI" id="CHEBI:74493"/>
        <dbReference type="EC" id="2.1.1.182"/>
    </reaction>
</comment>
<comment type="subcellular location">
    <subcellularLocation>
        <location evidence="1">Cytoplasm</location>
    </subcellularLocation>
</comment>
<comment type="similarity">
    <text evidence="1">Belongs to the class I-like SAM-binding methyltransferase superfamily. rRNA adenine N(6)-methyltransferase family. RsmA subfamily.</text>
</comment>
<accession>Q73IR3</accession>
<reference key="1">
    <citation type="journal article" date="2004" name="PLoS Biol.">
        <title>Phylogenomics of the reproductive parasite Wolbachia pipientis wMel: a streamlined genome overrun by mobile genetic elements.</title>
        <authorList>
            <person name="Wu M."/>
            <person name="Sun L.V."/>
            <person name="Vamathevan J.J."/>
            <person name="Riegler M."/>
            <person name="DeBoy R.T."/>
            <person name="Brownlie J.C."/>
            <person name="McGraw E.A."/>
            <person name="Martin W."/>
            <person name="Esser C."/>
            <person name="Ahmadinejad N."/>
            <person name="Wiegand C."/>
            <person name="Madupu R."/>
            <person name="Beanan M.J."/>
            <person name="Brinkac L.M."/>
            <person name="Daugherty S.C."/>
            <person name="Durkin A.S."/>
            <person name="Kolonay J.F."/>
            <person name="Nelson W.C."/>
            <person name="Mohamoud Y."/>
            <person name="Lee P."/>
            <person name="Berry K.J."/>
            <person name="Young M.B."/>
            <person name="Utterback T.R."/>
            <person name="Weidman J.F."/>
            <person name="Nierman W.C."/>
            <person name="Paulsen I.T."/>
            <person name="Nelson K.E."/>
            <person name="Tettelin H."/>
            <person name="O'Neill S.L."/>
            <person name="Eisen J.A."/>
        </authorList>
    </citation>
    <scope>NUCLEOTIDE SEQUENCE [LARGE SCALE GENOMIC DNA]</scope>
</reference>
<feature type="chain" id="PRO_0000101642" description="Ribosomal RNA small subunit methyltransferase A">
    <location>
        <begin position="1"/>
        <end position="286"/>
    </location>
</feature>
<feature type="binding site" evidence="1">
    <location>
        <position position="31"/>
    </location>
    <ligand>
        <name>S-adenosyl-L-methionine</name>
        <dbReference type="ChEBI" id="CHEBI:59789"/>
    </ligand>
</feature>
<feature type="binding site" evidence="1">
    <location>
        <position position="33"/>
    </location>
    <ligand>
        <name>S-adenosyl-L-methionine</name>
        <dbReference type="ChEBI" id="CHEBI:59789"/>
    </ligand>
</feature>
<feature type="binding site" evidence="1">
    <location>
        <position position="58"/>
    </location>
    <ligand>
        <name>S-adenosyl-L-methionine</name>
        <dbReference type="ChEBI" id="CHEBI:59789"/>
    </ligand>
</feature>
<feature type="binding site" evidence="1">
    <location>
        <position position="80"/>
    </location>
    <ligand>
        <name>S-adenosyl-L-methionine</name>
        <dbReference type="ChEBI" id="CHEBI:59789"/>
    </ligand>
</feature>
<feature type="binding site" evidence="1">
    <location>
        <position position="106"/>
    </location>
    <ligand>
        <name>S-adenosyl-L-methionine</name>
        <dbReference type="ChEBI" id="CHEBI:59789"/>
    </ligand>
</feature>
<feature type="binding site" evidence="1">
    <location>
        <position position="125"/>
    </location>
    <ligand>
        <name>S-adenosyl-L-methionine</name>
        <dbReference type="ChEBI" id="CHEBI:59789"/>
    </ligand>
</feature>
<protein>
    <recommendedName>
        <fullName evidence="1">Ribosomal RNA small subunit methyltransferase A</fullName>
        <ecNumber evidence="1">2.1.1.182</ecNumber>
    </recommendedName>
    <alternativeName>
        <fullName evidence="1">16S rRNA (adenine(1518)-N(6)/adenine(1519)-N(6))-dimethyltransferase</fullName>
    </alternativeName>
    <alternativeName>
        <fullName evidence="1">16S rRNA dimethyladenosine transferase</fullName>
    </alternativeName>
    <alternativeName>
        <fullName evidence="1">16S rRNA dimethylase</fullName>
    </alternativeName>
    <alternativeName>
        <fullName evidence="1">S-adenosylmethionine-6-N', N'-adenosyl(rRNA) dimethyltransferase</fullName>
    </alternativeName>
</protein>
<organism>
    <name type="scientific">Wolbachia pipientis wMel</name>
    <dbReference type="NCBI Taxonomy" id="163164"/>
    <lineage>
        <taxon>Bacteria</taxon>
        <taxon>Pseudomonadati</taxon>
        <taxon>Pseudomonadota</taxon>
        <taxon>Alphaproteobacteria</taxon>
        <taxon>Rickettsiales</taxon>
        <taxon>Anaplasmataceae</taxon>
        <taxon>Wolbachieae</taxon>
        <taxon>Wolbachia</taxon>
    </lineage>
</organism>